<gene>
    <name evidence="1" type="primary">rplN</name>
    <name type="ordered locus">Francci3_0592</name>
</gene>
<evidence type="ECO:0000255" key="1">
    <source>
        <dbReference type="HAMAP-Rule" id="MF_01367"/>
    </source>
</evidence>
<evidence type="ECO:0000305" key="2"/>
<sequence>MIQQESRLRVADNTGAREILCIRVLGGSGRRYAGIGDIIVGTVKDALPGAGVKRGDVVKAVVVRTTKERRRPDGSYIRFDENAAVLIRDGGDPRGTRIFGPVGRELRDKKFMKIISLAPEVL</sequence>
<organism>
    <name type="scientific">Frankia casuarinae (strain DSM 45818 / CECT 9043 / HFP020203 / CcI3)</name>
    <dbReference type="NCBI Taxonomy" id="106370"/>
    <lineage>
        <taxon>Bacteria</taxon>
        <taxon>Bacillati</taxon>
        <taxon>Actinomycetota</taxon>
        <taxon>Actinomycetes</taxon>
        <taxon>Frankiales</taxon>
        <taxon>Frankiaceae</taxon>
        <taxon>Frankia</taxon>
    </lineage>
</organism>
<dbReference type="EMBL" id="CP000249">
    <property type="protein sequence ID" value="ABD09976.1"/>
    <property type="molecule type" value="Genomic_DNA"/>
</dbReference>
<dbReference type="RefSeq" id="WP_009740518.1">
    <property type="nucleotide sequence ID" value="NZ_LRTJ01000013.1"/>
</dbReference>
<dbReference type="SMR" id="Q2JFG6"/>
<dbReference type="STRING" id="106370.Francci3_0592"/>
<dbReference type="KEGG" id="fra:Francci3_0592"/>
<dbReference type="eggNOG" id="COG0093">
    <property type="taxonomic scope" value="Bacteria"/>
</dbReference>
<dbReference type="HOGENOM" id="CLU_095071_2_1_11"/>
<dbReference type="OrthoDB" id="9806379at2"/>
<dbReference type="PhylomeDB" id="Q2JFG6"/>
<dbReference type="Proteomes" id="UP000001937">
    <property type="component" value="Chromosome"/>
</dbReference>
<dbReference type="GO" id="GO:0022625">
    <property type="term" value="C:cytosolic large ribosomal subunit"/>
    <property type="evidence" value="ECO:0007669"/>
    <property type="project" value="TreeGrafter"/>
</dbReference>
<dbReference type="GO" id="GO:0070180">
    <property type="term" value="F:large ribosomal subunit rRNA binding"/>
    <property type="evidence" value="ECO:0007669"/>
    <property type="project" value="TreeGrafter"/>
</dbReference>
<dbReference type="GO" id="GO:0003735">
    <property type="term" value="F:structural constituent of ribosome"/>
    <property type="evidence" value="ECO:0007669"/>
    <property type="project" value="InterPro"/>
</dbReference>
<dbReference type="GO" id="GO:0006412">
    <property type="term" value="P:translation"/>
    <property type="evidence" value="ECO:0007669"/>
    <property type="project" value="UniProtKB-UniRule"/>
</dbReference>
<dbReference type="CDD" id="cd00337">
    <property type="entry name" value="Ribosomal_uL14"/>
    <property type="match status" value="1"/>
</dbReference>
<dbReference type="FunFam" id="2.40.150.20:FF:000001">
    <property type="entry name" value="50S ribosomal protein L14"/>
    <property type="match status" value="1"/>
</dbReference>
<dbReference type="Gene3D" id="2.40.150.20">
    <property type="entry name" value="Ribosomal protein L14"/>
    <property type="match status" value="1"/>
</dbReference>
<dbReference type="HAMAP" id="MF_01367">
    <property type="entry name" value="Ribosomal_uL14"/>
    <property type="match status" value="1"/>
</dbReference>
<dbReference type="InterPro" id="IPR000218">
    <property type="entry name" value="Ribosomal_uL14"/>
</dbReference>
<dbReference type="InterPro" id="IPR005745">
    <property type="entry name" value="Ribosomal_uL14_bac-type"/>
</dbReference>
<dbReference type="InterPro" id="IPR019972">
    <property type="entry name" value="Ribosomal_uL14_CS"/>
</dbReference>
<dbReference type="InterPro" id="IPR036853">
    <property type="entry name" value="Ribosomal_uL14_sf"/>
</dbReference>
<dbReference type="NCBIfam" id="TIGR01067">
    <property type="entry name" value="rplN_bact"/>
    <property type="match status" value="1"/>
</dbReference>
<dbReference type="PANTHER" id="PTHR11761">
    <property type="entry name" value="50S/60S RIBOSOMAL PROTEIN L14/L23"/>
    <property type="match status" value="1"/>
</dbReference>
<dbReference type="PANTHER" id="PTHR11761:SF3">
    <property type="entry name" value="LARGE RIBOSOMAL SUBUNIT PROTEIN UL14M"/>
    <property type="match status" value="1"/>
</dbReference>
<dbReference type="Pfam" id="PF00238">
    <property type="entry name" value="Ribosomal_L14"/>
    <property type="match status" value="1"/>
</dbReference>
<dbReference type="SMART" id="SM01374">
    <property type="entry name" value="Ribosomal_L14"/>
    <property type="match status" value="1"/>
</dbReference>
<dbReference type="SUPFAM" id="SSF50193">
    <property type="entry name" value="Ribosomal protein L14"/>
    <property type="match status" value="1"/>
</dbReference>
<dbReference type="PROSITE" id="PS00049">
    <property type="entry name" value="RIBOSOMAL_L14"/>
    <property type="match status" value="1"/>
</dbReference>
<proteinExistence type="inferred from homology"/>
<protein>
    <recommendedName>
        <fullName evidence="1">Large ribosomal subunit protein uL14</fullName>
    </recommendedName>
    <alternativeName>
        <fullName evidence="2">50S ribosomal protein L14</fullName>
    </alternativeName>
</protein>
<reference key="1">
    <citation type="journal article" date="2007" name="Genome Res.">
        <title>Genome characteristics of facultatively symbiotic Frankia sp. strains reflect host range and host plant biogeography.</title>
        <authorList>
            <person name="Normand P."/>
            <person name="Lapierre P."/>
            <person name="Tisa L.S."/>
            <person name="Gogarten J.P."/>
            <person name="Alloisio N."/>
            <person name="Bagnarol E."/>
            <person name="Bassi C.A."/>
            <person name="Berry A.M."/>
            <person name="Bickhart D.M."/>
            <person name="Choisne N."/>
            <person name="Couloux A."/>
            <person name="Cournoyer B."/>
            <person name="Cruveiller S."/>
            <person name="Daubin V."/>
            <person name="Demange N."/>
            <person name="Francino M.P."/>
            <person name="Goltsman E."/>
            <person name="Huang Y."/>
            <person name="Kopp O.R."/>
            <person name="Labarre L."/>
            <person name="Lapidus A."/>
            <person name="Lavire C."/>
            <person name="Marechal J."/>
            <person name="Martinez M."/>
            <person name="Mastronunzio J.E."/>
            <person name="Mullin B.C."/>
            <person name="Niemann J."/>
            <person name="Pujic P."/>
            <person name="Rawnsley T."/>
            <person name="Rouy Z."/>
            <person name="Schenowitz C."/>
            <person name="Sellstedt A."/>
            <person name="Tavares F."/>
            <person name="Tomkins J.P."/>
            <person name="Vallenet D."/>
            <person name="Valverde C."/>
            <person name="Wall L.G."/>
            <person name="Wang Y."/>
            <person name="Medigue C."/>
            <person name="Benson D.R."/>
        </authorList>
    </citation>
    <scope>NUCLEOTIDE SEQUENCE [LARGE SCALE GENOMIC DNA]</scope>
    <source>
        <strain>DSM 45818 / CECT 9043 / HFP020203 / CcI3</strain>
    </source>
</reference>
<feature type="chain" id="PRO_1000055582" description="Large ribosomal subunit protein uL14">
    <location>
        <begin position="1"/>
        <end position="122"/>
    </location>
</feature>
<name>RL14_FRACC</name>
<comment type="function">
    <text evidence="1">Binds to 23S rRNA. Forms part of two intersubunit bridges in the 70S ribosome.</text>
</comment>
<comment type="subunit">
    <text evidence="1">Part of the 50S ribosomal subunit. Forms a cluster with proteins L3 and L19. In the 70S ribosome, L14 and L19 interact and together make contacts with the 16S rRNA in bridges B5 and B8.</text>
</comment>
<comment type="similarity">
    <text evidence="1">Belongs to the universal ribosomal protein uL14 family.</text>
</comment>
<accession>Q2JFG6</accession>
<keyword id="KW-1185">Reference proteome</keyword>
<keyword id="KW-0687">Ribonucleoprotein</keyword>
<keyword id="KW-0689">Ribosomal protein</keyword>
<keyword id="KW-0694">RNA-binding</keyword>
<keyword id="KW-0699">rRNA-binding</keyword>